<sequence length="235" mass="25749">KNMITGAAQMDGAILVVSGADGPMPQTKEHILLAKQVGVPNIVVFLNKEDQVDDKELLELVELEVRETLDKYEFPGDEIPVIPGSALLALEALIENPKTQRGENPWVDKIYQLMDKVDSYIPTPQRETDKPFLLAVEDVLSITGRGTVATGRVERGTLKISDTVEFVGLKPTQSAVVTGLEMFKKTLDETLAGDNVGVLLRGVQKKDIERGMVIAKPGTITPHTKFEAQVYVLTK</sequence>
<proteinExistence type="inferred from homology"/>
<organism>
    <name type="scientific">Gonium pectorale</name>
    <name type="common">Green alga</name>
    <dbReference type="NCBI Taxonomy" id="33097"/>
    <lineage>
        <taxon>Eukaryota</taxon>
        <taxon>Viridiplantae</taxon>
        <taxon>Chlorophyta</taxon>
        <taxon>core chlorophytes</taxon>
        <taxon>Chlorophyceae</taxon>
        <taxon>CS clade</taxon>
        <taxon>Chlamydomonadales</taxon>
        <taxon>Volvocaceae</taxon>
        <taxon>Gonium</taxon>
    </lineage>
</organism>
<comment type="function">
    <text evidence="2">GTP hydrolase that promotes the GTP-dependent binding of aminoacyl-tRNA to the A-site of ribosomes during protein biosynthesis.</text>
</comment>
<comment type="catalytic activity">
    <reaction evidence="2">
        <text>GTP + H2O = GDP + phosphate + H(+)</text>
        <dbReference type="Rhea" id="RHEA:19669"/>
        <dbReference type="ChEBI" id="CHEBI:15377"/>
        <dbReference type="ChEBI" id="CHEBI:15378"/>
        <dbReference type="ChEBI" id="CHEBI:37565"/>
        <dbReference type="ChEBI" id="CHEBI:43474"/>
        <dbReference type="ChEBI" id="CHEBI:58189"/>
        <dbReference type="EC" id="3.6.5.3"/>
    </reaction>
    <physiologicalReaction direction="left-to-right" evidence="2">
        <dbReference type="Rhea" id="RHEA:19670"/>
    </physiologicalReaction>
</comment>
<comment type="subcellular location">
    <subcellularLocation>
        <location>Plastid</location>
        <location>Chloroplast</location>
    </subcellularLocation>
</comment>
<comment type="similarity">
    <text evidence="3">Belongs to the TRAFAC class translation factor GTPase superfamily. Classic translation factor GTPase family. EF-Tu/EF-1A subfamily.</text>
</comment>
<name>EFTU_GONPE</name>
<feature type="chain" id="PRO_0000091459" description="Elongation factor Tu, chloroplastic">
    <location>
        <begin position="1" status="less than"/>
        <end position="235" status="greater than"/>
    </location>
</feature>
<feature type="domain" description="tr-type G" evidence="3">
    <location>
        <begin position="1" status="less than"/>
        <end position="125"/>
    </location>
</feature>
<feature type="binding site" evidence="1">
    <location>
        <begin position="47"/>
        <end position="50"/>
    </location>
    <ligand>
        <name>GTP</name>
        <dbReference type="ChEBI" id="CHEBI:37565"/>
    </ligand>
</feature>
<feature type="non-terminal residue">
    <location>
        <position position="1"/>
    </location>
</feature>
<feature type="non-terminal residue">
    <location>
        <position position="235"/>
    </location>
</feature>
<keyword id="KW-0150">Chloroplast</keyword>
<keyword id="KW-0251">Elongation factor</keyword>
<keyword id="KW-0342">GTP-binding</keyword>
<keyword id="KW-0378">Hydrolase</keyword>
<keyword id="KW-0547">Nucleotide-binding</keyword>
<keyword id="KW-0934">Plastid</keyword>
<keyword id="KW-0648">Protein biosynthesis</keyword>
<geneLocation type="chloroplast"/>
<dbReference type="EC" id="3.6.5.3" evidence="2"/>
<dbReference type="EMBL" id="U09435">
    <property type="protein sequence ID" value="AAA87692.1"/>
    <property type="molecule type" value="Genomic_DNA"/>
</dbReference>
<dbReference type="SMR" id="P50378"/>
<dbReference type="GO" id="GO:0009507">
    <property type="term" value="C:chloroplast"/>
    <property type="evidence" value="ECO:0007669"/>
    <property type="project" value="UniProtKB-SubCell"/>
</dbReference>
<dbReference type="GO" id="GO:0005739">
    <property type="term" value="C:mitochondrion"/>
    <property type="evidence" value="ECO:0007669"/>
    <property type="project" value="TreeGrafter"/>
</dbReference>
<dbReference type="GO" id="GO:0005525">
    <property type="term" value="F:GTP binding"/>
    <property type="evidence" value="ECO:0007669"/>
    <property type="project" value="UniProtKB-KW"/>
</dbReference>
<dbReference type="GO" id="GO:0003924">
    <property type="term" value="F:GTPase activity"/>
    <property type="evidence" value="ECO:0007669"/>
    <property type="project" value="InterPro"/>
</dbReference>
<dbReference type="GO" id="GO:0003746">
    <property type="term" value="F:translation elongation factor activity"/>
    <property type="evidence" value="ECO:0007669"/>
    <property type="project" value="UniProtKB-KW"/>
</dbReference>
<dbReference type="GO" id="GO:0070125">
    <property type="term" value="P:mitochondrial translational elongation"/>
    <property type="evidence" value="ECO:0007669"/>
    <property type="project" value="TreeGrafter"/>
</dbReference>
<dbReference type="CDD" id="cd03697">
    <property type="entry name" value="EFTU_II"/>
    <property type="match status" value="1"/>
</dbReference>
<dbReference type="FunFam" id="2.40.30.10:FF:000001">
    <property type="entry name" value="Elongation factor Tu"/>
    <property type="match status" value="1"/>
</dbReference>
<dbReference type="Gene3D" id="3.40.50.300">
    <property type="entry name" value="P-loop containing nucleotide triphosphate hydrolases"/>
    <property type="match status" value="1"/>
</dbReference>
<dbReference type="Gene3D" id="2.40.30.10">
    <property type="entry name" value="Translation factors"/>
    <property type="match status" value="1"/>
</dbReference>
<dbReference type="InterPro" id="IPR050055">
    <property type="entry name" value="EF-Tu_GTPase"/>
</dbReference>
<dbReference type="InterPro" id="IPR004161">
    <property type="entry name" value="EFTu-like_2"/>
</dbReference>
<dbReference type="InterPro" id="IPR033720">
    <property type="entry name" value="EFTU_2"/>
</dbReference>
<dbReference type="InterPro" id="IPR027417">
    <property type="entry name" value="P-loop_NTPase"/>
</dbReference>
<dbReference type="InterPro" id="IPR000795">
    <property type="entry name" value="T_Tr_GTP-bd_dom"/>
</dbReference>
<dbReference type="InterPro" id="IPR009000">
    <property type="entry name" value="Transl_B-barrel_sf"/>
</dbReference>
<dbReference type="PANTHER" id="PTHR43721:SF5">
    <property type="entry name" value="ELONGATION FACTOR TU, CHLOROPLASTIC"/>
    <property type="match status" value="1"/>
</dbReference>
<dbReference type="PANTHER" id="PTHR43721">
    <property type="entry name" value="ELONGATION FACTOR TU-RELATED"/>
    <property type="match status" value="1"/>
</dbReference>
<dbReference type="Pfam" id="PF00009">
    <property type="entry name" value="GTP_EFTU"/>
    <property type="match status" value="1"/>
</dbReference>
<dbReference type="Pfam" id="PF03144">
    <property type="entry name" value="GTP_EFTU_D2"/>
    <property type="match status" value="1"/>
</dbReference>
<dbReference type="PRINTS" id="PR00315">
    <property type="entry name" value="ELONGATNFCT"/>
</dbReference>
<dbReference type="SUPFAM" id="SSF52540">
    <property type="entry name" value="P-loop containing nucleoside triphosphate hydrolases"/>
    <property type="match status" value="1"/>
</dbReference>
<dbReference type="SUPFAM" id="SSF50447">
    <property type="entry name" value="Translation proteins"/>
    <property type="match status" value="1"/>
</dbReference>
<dbReference type="PROSITE" id="PS51722">
    <property type="entry name" value="G_TR_2"/>
    <property type="match status" value="1"/>
</dbReference>
<evidence type="ECO:0000250" key="1"/>
<evidence type="ECO:0000255" key="2">
    <source>
        <dbReference type="HAMAP-Rule" id="MF_00118"/>
    </source>
</evidence>
<evidence type="ECO:0000255" key="3">
    <source>
        <dbReference type="PROSITE-ProRule" id="PRU01059"/>
    </source>
</evidence>
<protein>
    <recommendedName>
        <fullName>Elongation factor Tu, chloroplastic</fullName>
        <shortName>EF-Tu</shortName>
        <ecNumber evidence="2">3.6.5.3</ecNumber>
    </recommendedName>
</protein>
<gene>
    <name type="primary">tufA</name>
</gene>
<reference key="1">
    <citation type="journal article" date="1995" name="Mol. Phylogenet. Evol.">
        <title>Phylogenetic analysis of tufA sequences indicates a cyanobacterial origin of all plastids.</title>
        <authorList>
            <person name="Delwiche C.F."/>
            <person name="Kuhsel M."/>
            <person name="Palmer J.D."/>
        </authorList>
    </citation>
    <scope>NUCLEOTIDE SEQUENCE [GENOMIC DNA]</scope>
</reference>
<accession>P50378</accession>